<comment type="function">
    <text evidence="1">Catalyzes the reversible adenylation of nicotinate mononucleotide (NaMN) to nicotinic acid adenine dinucleotide (NaAD).</text>
</comment>
<comment type="catalytic activity">
    <reaction evidence="1">
        <text>nicotinate beta-D-ribonucleotide + ATP + H(+) = deamido-NAD(+) + diphosphate</text>
        <dbReference type="Rhea" id="RHEA:22860"/>
        <dbReference type="ChEBI" id="CHEBI:15378"/>
        <dbReference type="ChEBI" id="CHEBI:30616"/>
        <dbReference type="ChEBI" id="CHEBI:33019"/>
        <dbReference type="ChEBI" id="CHEBI:57502"/>
        <dbReference type="ChEBI" id="CHEBI:58437"/>
        <dbReference type="EC" id="2.7.7.18"/>
    </reaction>
</comment>
<comment type="pathway">
    <text evidence="1">Cofactor biosynthesis; NAD(+) biosynthesis; deamido-NAD(+) from nicotinate D-ribonucleotide: step 1/1.</text>
</comment>
<comment type="similarity">
    <text evidence="1">Belongs to the NadD family.</text>
</comment>
<protein>
    <recommendedName>
        <fullName evidence="1">Probable nicotinate-nucleotide adenylyltransferase</fullName>
        <ecNumber evidence="1">2.7.7.18</ecNumber>
    </recommendedName>
    <alternativeName>
        <fullName evidence="1">Deamido-NAD(+) diphosphorylase</fullName>
    </alternativeName>
    <alternativeName>
        <fullName evidence="1">Deamido-NAD(+) pyrophosphorylase</fullName>
    </alternativeName>
    <alternativeName>
        <fullName evidence="1">Nicotinate mononucleotide adenylyltransferase</fullName>
        <shortName evidence="1">NaMN adenylyltransferase</shortName>
    </alternativeName>
</protein>
<gene>
    <name evidence="1" type="primary">nadD</name>
    <name type="ordered locus">COPRO5265_0545</name>
</gene>
<dbReference type="EC" id="2.7.7.18" evidence="1"/>
<dbReference type="EMBL" id="CP001145">
    <property type="protein sequence ID" value="ACI17187.1"/>
    <property type="molecule type" value="Genomic_DNA"/>
</dbReference>
<dbReference type="RefSeq" id="WP_012543839.1">
    <property type="nucleotide sequence ID" value="NC_011295.1"/>
</dbReference>
<dbReference type="SMR" id="B5Y804"/>
<dbReference type="STRING" id="309798.COPRO5265_0545"/>
<dbReference type="KEGG" id="cpo:COPRO5265_0545"/>
<dbReference type="eggNOG" id="COG1057">
    <property type="taxonomic scope" value="Bacteria"/>
</dbReference>
<dbReference type="HOGENOM" id="CLU_069765_3_1_9"/>
<dbReference type="OrthoDB" id="5295945at2"/>
<dbReference type="UniPathway" id="UPA00253">
    <property type="reaction ID" value="UER00332"/>
</dbReference>
<dbReference type="Proteomes" id="UP000001732">
    <property type="component" value="Chromosome"/>
</dbReference>
<dbReference type="GO" id="GO:0005524">
    <property type="term" value="F:ATP binding"/>
    <property type="evidence" value="ECO:0007669"/>
    <property type="project" value="UniProtKB-KW"/>
</dbReference>
<dbReference type="GO" id="GO:0004515">
    <property type="term" value="F:nicotinate-nucleotide adenylyltransferase activity"/>
    <property type="evidence" value="ECO:0007669"/>
    <property type="project" value="UniProtKB-UniRule"/>
</dbReference>
<dbReference type="GO" id="GO:0009435">
    <property type="term" value="P:NAD biosynthetic process"/>
    <property type="evidence" value="ECO:0007669"/>
    <property type="project" value="UniProtKB-UniRule"/>
</dbReference>
<dbReference type="CDD" id="cd02165">
    <property type="entry name" value="NMNAT"/>
    <property type="match status" value="1"/>
</dbReference>
<dbReference type="Gene3D" id="3.40.50.620">
    <property type="entry name" value="HUPs"/>
    <property type="match status" value="1"/>
</dbReference>
<dbReference type="HAMAP" id="MF_00244">
    <property type="entry name" value="NaMN_adenylyltr"/>
    <property type="match status" value="1"/>
</dbReference>
<dbReference type="InterPro" id="IPR004821">
    <property type="entry name" value="Cyt_trans-like"/>
</dbReference>
<dbReference type="InterPro" id="IPR005248">
    <property type="entry name" value="NadD/NMNAT"/>
</dbReference>
<dbReference type="InterPro" id="IPR014729">
    <property type="entry name" value="Rossmann-like_a/b/a_fold"/>
</dbReference>
<dbReference type="NCBIfam" id="TIGR00125">
    <property type="entry name" value="cyt_tran_rel"/>
    <property type="match status" value="1"/>
</dbReference>
<dbReference type="NCBIfam" id="TIGR00482">
    <property type="entry name" value="nicotinate (nicotinamide) nucleotide adenylyltransferase"/>
    <property type="match status" value="1"/>
</dbReference>
<dbReference type="PANTHER" id="PTHR39321">
    <property type="entry name" value="NICOTINATE-NUCLEOTIDE ADENYLYLTRANSFERASE-RELATED"/>
    <property type="match status" value="1"/>
</dbReference>
<dbReference type="PANTHER" id="PTHR39321:SF3">
    <property type="entry name" value="PHOSPHOPANTETHEINE ADENYLYLTRANSFERASE"/>
    <property type="match status" value="1"/>
</dbReference>
<dbReference type="Pfam" id="PF01467">
    <property type="entry name" value="CTP_transf_like"/>
    <property type="match status" value="1"/>
</dbReference>
<dbReference type="SUPFAM" id="SSF52374">
    <property type="entry name" value="Nucleotidylyl transferase"/>
    <property type="match status" value="1"/>
</dbReference>
<reference key="1">
    <citation type="submission" date="2008-08" db="EMBL/GenBank/DDBJ databases">
        <title>The complete genome sequence of Coprothermobacter proteolyticus strain ATCC 5245 / DSM 5265 / BT.</title>
        <authorList>
            <person name="Dodson R.J."/>
            <person name="Durkin A.S."/>
            <person name="Wu M."/>
            <person name="Eisen J."/>
            <person name="Sutton G."/>
        </authorList>
    </citation>
    <scope>NUCLEOTIDE SEQUENCE [LARGE SCALE GENOMIC DNA]</scope>
    <source>
        <strain>ATCC 35245 / DSM 5265 / OCM 4 / BT</strain>
    </source>
</reference>
<keyword id="KW-0067">ATP-binding</keyword>
<keyword id="KW-0520">NAD</keyword>
<keyword id="KW-0547">Nucleotide-binding</keyword>
<keyword id="KW-0548">Nucleotidyltransferase</keyword>
<keyword id="KW-0662">Pyridine nucleotide biosynthesis</keyword>
<keyword id="KW-1185">Reference proteome</keyword>
<keyword id="KW-0808">Transferase</keyword>
<accession>B5Y804</accession>
<sequence>MIKPLKSSRTGLLAGVFDPVHIGHLFMAHLAMEAANLDRVWFVPTHIPPHKDSAKVPYFHRVNMLEMALKEEPKFVLMELEREARPTYSYETILSVKHVLGEKPYFILGSDEWEELHNWRRYDLLVKNAIFIVVPRKPITVARPEAEAIFTDMTPINVSSTYIRQRVAKGKPITYLVPKTVETYIHENHLYYP</sequence>
<feature type="chain" id="PRO_1000125348" description="Probable nicotinate-nucleotide adenylyltransferase">
    <location>
        <begin position="1"/>
        <end position="193"/>
    </location>
</feature>
<name>NADD_COPPD</name>
<organism>
    <name type="scientific">Coprothermobacter proteolyticus (strain ATCC 35245 / DSM 5265 / OCM 4 / BT)</name>
    <dbReference type="NCBI Taxonomy" id="309798"/>
    <lineage>
        <taxon>Bacteria</taxon>
        <taxon>Pseudomonadati</taxon>
        <taxon>Coprothermobacterota</taxon>
        <taxon>Coprothermobacteria</taxon>
        <taxon>Coprothermobacterales</taxon>
        <taxon>Coprothermobacteraceae</taxon>
        <taxon>Coprothermobacter</taxon>
    </lineage>
</organism>
<evidence type="ECO:0000255" key="1">
    <source>
        <dbReference type="HAMAP-Rule" id="MF_00244"/>
    </source>
</evidence>
<proteinExistence type="inferred from homology"/>